<name>PSB1_STAMF</name>
<sequence>MVFIAVFNGVFAMSSLPGTVLGIKAVNGVVIAGEKRLTYDGYVLSKNTRKVHPITKHVGIGFAGLVGDAQFIIRALRMEAENYELQLGREIRVRGLAKILSLILYSYKLAPLMTEVVVGGFDEKGPQIYVLDPVGSLIEDKYVALGSGGPIALGIIEKEYREDIDVDEAEKLAVSAIREAIERDAVSGDGVDVLRITEEGYSLREYMFRRETS</sequence>
<comment type="function">
    <text evidence="1">Component of the proteasome core, a large protease complex with broad specificity involved in protein degradation.</text>
</comment>
<comment type="catalytic activity">
    <reaction evidence="1">
        <text>Cleavage of peptide bonds with very broad specificity.</text>
        <dbReference type="EC" id="3.4.25.1"/>
    </reaction>
</comment>
<comment type="activity regulation">
    <text evidence="1">The formation of the proteasomal ATPase PAN-20S proteasome complex, via the docking of the C-termini of PAN into the intersubunit pockets in the alpha-rings, triggers opening of the gate for substrate entry. Interconversion between the open-gate and close-gate conformations leads to a dynamic regulation of the 20S proteasome proteolysis activity.</text>
</comment>
<comment type="subunit">
    <text evidence="1">The 20S proteasome core is composed of 14 alpha and 14 beta subunits that assemble into four stacked heptameric rings, resulting in a barrel-shaped structure. The two inner rings, each composed of seven catalytic beta subunits, are sandwiched by two outer rings, each composed of seven alpha subunits. The catalytic chamber with the active sites is on the inside of the barrel. Has a gated structure, the ends of the cylinder being occluded by the N-termini of the alpha-subunits. Is capped at one or both ends by the proteasome regulatory ATPase, PAN.</text>
</comment>
<comment type="subcellular location">
    <subcellularLocation>
        <location evidence="1">Cytoplasm</location>
    </subcellularLocation>
</comment>
<comment type="similarity">
    <text evidence="1">Belongs to the peptidase T1B family.</text>
</comment>
<feature type="propeptide" id="PRO_0000397418" description="Removed in mature form; by autocatalysis" evidence="1">
    <location>
        <begin position="1"/>
        <end position="18"/>
    </location>
</feature>
<feature type="chain" id="PRO_0000397419" description="Proteasome subunit beta 1">
    <location>
        <begin position="19"/>
        <end position="213"/>
    </location>
</feature>
<feature type="active site" description="Nucleophile" evidence="1">
    <location>
        <position position="19"/>
    </location>
</feature>
<protein>
    <recommendedName>
        <fullName evidence="1">Proteasome subunit beta 1</fullName>
        <ecNumber evidence="1">3.4.25.1</ecNumber>
    </recommendedName>
    <alternativeName>
        <fullName evidence="1">20S proteasome beta subunit 1</fullName>
    </alternativeName>
    <alternativeName>
        <fullName evidence="1">Proteasome core protein PsmB 1</fullName>
    </alternativeName>
</protein>
<accession>A3DN21</accession>
<keyword id="KW-0068">Autocatalytic cleavage</keyword>
<keyword id="KW-0963">Cytoplasm</keyword>
<keyword id="KW-0378">Hydrolase</keyword>
<keyword id="KW-0645">Protease</keyword>
<keyword id="KW-0647">Proteasome</keyword>
<keyword id="KW-1185">Reference proteome</keyword>
<keyword id="KW-0888">Threonine protease</keyword>
<keyword id="KW-0865">Zymogen</keyword>
<dbReference type="EC" id="3.4.25.1" evidence="1"/>
<dbReference type="EMBL" id="CP000575">
    <property type="protein sequence ID" value="ABN70031.1"/>
    <property type="molecule type" value="Genomic_DNA"/>
</dbReference>
<dbReference type="SMR" id="A3DN21"/>
<dbReference type="STRING" id="399550.Smar_0932"/>
<dbReference type="KEGG" id="smr:Smar_0932"/>
<dbReference type="eggNOG" id="arCOG00970">
    <property type="taxonomic scope" value="Archaea"/>
</dbReference>
<dbReference type="HOGENOM" id="CLU_035750_7_2_2"/>
<dbReference type="OrthoDB" id="6330at2157"/>
<dbReference type="Proteomes" id="UP000000254">
    <property type="component" value="Chromosome"/>
</dbReference>
<dbReference type="GO" id="GO:0005737">
    <property type="term" value="C:cytoplasm"/>
    <property type="evidence" value="ECO:0007669"/>
    <property type="project" value="UniProtKB-SubCell"/>
</dbReference>
<dbReference type="GO" id="GO:0019774">
    <property type="term" value="C:proteasome core complex, beta-subunit complex"/>
    <property type="evidence" value="ECO:0007669"/>
    <property type="project" value="UniProtKB-UniRule"/>
</dbReference>
<dbReference type="GO" id="GO:0004298">
    <property type="term" value="F:threonine-type endopeptidase activity"/>
    <property type="evidence" value="ECO:0007669"/>
    <property type="project" value="UniProtKB-UniRule"/>
</dbReference>
<dbReference type="GO" id="GO:0010498">
    <property type="term" value="P:proteasomal protein catabolic process"/>
    <property type="evidence" value="ECO:0007669"/>
    <property type="project" value="UniProtKB-UniRule"/>
</dbReference>
<dbReference type="Gene3D" id="3.60.20.10">
    <property type="entry name" value="Glutamine Phosphoribosylpyrophosphate, subunit 1, domain 1"/>
    <property type="match status" value="1"/>
</dbReference>
<dbReference type="HAMAP" id="MF_02113_A">
    <property type="entry name" value="Proteasome_B_A"/>
    <property type="match status" value="1"/>
</dbReference>
<dbReference type="InterPro" id="IPR029055">
    <property type="entry name" value="Ntn_hydrolases_N"/>
</dbReference>
<dbReference type="InterPro" id="IPR019983">
    <property type="entry name" value="Pept_T1A_Psome_bsu_arc"/>
</dbReference>
<dbReference type="InterPro" id="IPR000243">
    <property type="entry name" value="Pept_T1A_subB"/>
</dbReference>
<dbReference type="InterPro" id="IPR016050">
    <property type="entry name" value="Proteasome_bsu_CS"/>
</dbReference>
<dbReference type="InterPro" id="IPR001353">
    <property type="entry name" value="Proteasome_sua/b"/>
</dbReference>
<dbReference type="InterPro" id="IPR023333">
    <property type="entry name" value="Proteasome_suB-type"/>
</dbReference>
<dbReference type="NCBIfam" id="TIGR03634">
    <property type="entry name" value="arc_protsome_B"/>
    <property type="match status" value="1"/>
</dbReference>
<dbReference type="PANTHER" id="PTHR32194:SF0">
    <property type="entry name" value="ATP-DEPENDENT PROTEASE SUBUNIT HSLV"/>
    <property type="match status" value="1"/>
</dbReference>
<dbReference type="PANTHER" id="PTHR32194">
    <property type="entry name" value="METALLOPROTEASE TLDD"/>
    <property type="match status" value="1"/>
</dbReference>
<dbReference type="Pfam" id="PF00227">
    <property type="entry name" value="Proteasome"/>
    <property type="match status" value="1"/>
</dbReference>
<dbReference type="PRINTS" id="PR00141">
    <property type="entry name" value="PROTEASOME"/>
</dbReference>
<dbReference type="SUPFAM" id="SSF56235">
    <property type="entry name" value="N-terminal nucleophile aminohydrolases (Ntn hydrolases)"/>
    <property type="match status" value="1"/>
</dbReference>
<dbReference type="PROSITE" id="PS00854">
    <property type="entry name" value="PROTEASOME_BETA_1"/>
    <property type="match status" value="1"/>
</dbReference>
<dbReference type="PROSITE" id="PS51476">
    <property type="entry name" value="PROTEASOME_BETA_2"/>
    <property type="match status" value="1"/>
</dbReference>
<organism>
    <name type="scientific">Staphylothermus marinus (strain ATCC 43588 / DSM 3639 / JCM 9404 / F1)</name>
    <dbReference type="NCBI Taxonomy" id="399550"/>
    <lineage>
        <taxon>Archaea</taxon>
        <taxon>Thermoproteota</taxon>
        <taxon>Thermoprotei</taxon>
        <taxon>Desulfurococcales</taxon>
        <taxon>Desulfurococcaceae</taxon>
        <taxon>Staphylothermus</taxon>
    </lineage>
</organism>
<evidence type="ECO:0000255" key="1">
    <source>
        <dbReference type="HAMAP-Rule" id="MF_02113"/>
    </source>
</evidence>
<proteinExistence type="inferred from homology"/>
<gene>
    <name evidence="1" type="primary">psmB1</name>
    <name type="ordered locus">Smar_0932</name>
</gene>
<reference key="1">
    <citation type="journal article" date="2009" name="BMC Genomics">
        <title>The complete genome sequence of Staphylothermus marinus reveals differences in sulfur metabolism among heterotrophic Crenarchaeota.</title>
        <authorList>
            <person name="Anderson I.J."/>
            <person name="Dharmarajan L."/>
            <person name="Rodriguez J."/>
            <person name="Hooper S."/>
            <person name="Porat I."/>
            <person name="Ulrich L.E."/>
            <person name="Elkins J.G."/>
            <person name="Mavromatis K."/>
            <person name="Sun H."/>
            <person name="Land M."/>
            <person name="Lapidus A."/>
            <person name="Lucas S."/>
            <person name="Barry K."/>
            <person name="Huber H."/>
            <person name="Zhulin I.B."/>
            <person name="Whitman W.B."/>
            <person name="Mukhopadhyay B."/>
            <person name="Woese C."/>
            <person name="Bristow J."/>
            <person name="Kyrpides N."/>
        </authorList>
    </citation>
    <scope>NUCLEOTIDE SEQUENCE [LARGE SCALE GENOMIC DNA]</scope>
    <source>
        <strain>ATCC 43588 / DSM 3639 / JCM 9404 / F1</strain>
    </source>
</reference>
<reference key="2">
    <citation type="journal article" date="2009" name="Stand. Genomic Sci.">
        <title>Complete genome sequence of Staphylothermus marinus Stetter and Fiala 1986 type strain F1.</title>
        <authorList>
            <person name="Anderson I.J."/>
            <person name="Sun H."/>
            <person name="Lapidus A."/>
            <person name="Copeland A."/>
            <person name="Glavina Del Rio T."/>
            <person name="Tice H."/>
            <person name="Dalin E."/>
            <person name="Lucas S."/>
            <person name="Barry K."/>
            <person name="Land M."/>
            <person name="Richardson P."/>
            <person name="Huber H."/>
            <person name="Kyrpides N.C."/>
        </authorList>
    </citation>
    <scope>NUCLEOTIDE SEQUENCE [LARGE SCALE GENOMIC DNA]</scope>
    <source>
        <strain>ATCC 43588 / DSM 3639 / JCM 9404 / F1</strain>
    </source>
</reference>